<reference key="1">
    <citation type="journal article" date="1993" name="Biochim. Biophys. Acta">
        <title>The isolation from a unicellular organism, Dictyostelium discoideum, of a highly-related cdc2 gene with characteristics of the PCTAIRE subfamily.</title>
        <authorList>
            <person name="Michaelis C.E."/>
            <person name="Weeks G."/>
        </authorList>
    </citation>
    <scope>NUCLEOTIDE SEQUENCE [MRNA]</scope>
</reference>
<reference key="2">
    <citation type="journal article" date="2005" name="Nature">
        <title>The genome of the social amoeba Dictyostelium discoideum.</title>
        <authorList>
            <person name="Eichinger L."/>
            <person name="Pachebat J.A."/>
            <person name="Gloeckner G."/>
            <person name="Rajandream M.A."/>
            <person name="Sucgang R."/>
            <person name="Berriman M."/>
            <person name="Song J."/>
            <person name="Olsen R."/>
            <person name="Szafranski K."/>
            <person name="Xu Q."/>
            <person name="Tunggal B."/>
            <person name="Kummerfeld S."/>
            <person name="Madera M."/>
            <person name="Konfortov B.A."/>
            <person name="Rivero F."/>
            <person name="Bankier A.T."/>
            <person name="Lehmann R."/>
            <person name="Hamlin N."/>
            <person name="Davies R."/>
            <person name="Gaudet P."/>
            <person name="Fey P."/>
            <person name="Pilcher K."/>
            <person name="Chen G."/>
            <person name="Saunders D."/>
            <person name="Sodergren E.J."/>
            <person name="Davis P."/>
            <person name="Kerhornou A."/>
            <person name="Nie X."/>
            <person name="Hall N."/>
            <person name="Anjard C."/>
            <person name="Hemphill L."/>
            <person name="Bason N."/>
            <person name="Farbrother P."/>
            <person name="Desany B."/>
            <person name="Just E."/>
            <person name="Morio T."/>
            <person name="Rost R."/>
            <person name="Churcher C.M."/>
            <person name="Cooper J."/>
            <person name="Haydock S."/>
            <person name="van Driessche N."/>
            <person name="Cronin A."/>
            <person name="Goodhead I."/>
            <person name="Muzny D.M."/>
            <person name="Mourier T."/>
            <person name="Pain A."/>
            <person name="Lu M."/>
            <person name="Harper D."/>
            <person name="Lindsay R."/>
            <person name="Hauser H."/>
            <person name="James K.D."/>
            <person name="Quiles M."/>
            <person name="Madan Babu M."/>
            <person name="Saito T."/>
            <person name="Buchrieser C."/>
            <person name="Wardroper A."/>
            <person name="Felder M."/>
            <person name="Thangavelu M."/>
            <person name="Johnson D."/>
            <person name="Knights A."/>
            <person name="Loulseged H."/>
            <person name="Mungall K.L."/>
            <person name="Oliver K."/>
            <person name="Price C."/>
            <person name="Quail M.A."/>
            <person name="Urushihara H."/>
            <person name="Hernandez J."/>
            <person name="Rabbinowitsch E."/>
            <person name="Steffen D."/>
            <person name="Sanders M."/>
            <person name="Ma J."/>
            <person name="Kohara Y."/>
            <person name="Sharp S."/>
            <person name="Simmonds M.N."/>
            <person name="Spiegler S."/>
            <person name="Tivey A."/>
            <person name="Sugano S."/>
            <person name="White B."/>
            <person name="Walker D."/>
            <person name="Woodward J.R."/>
            <person name="Winckler T."/>
            <person name="Tanaka Y."/>
            <person name="Shaulsky G."/>
            <person name="Schleicher M."/>
            <person name="Weinstock G.M."/>
            <person name="Rosenthal A."/>
            <person name="Cox E.C."/>
            <person name="Chisholm R.L."/>
            <person name="Gibbs R.A."/>
            <person name="Loomis W.F."/>
            <person name="Platzer M."/>
            <person name="Kay R.R."/>
            <person name="Williams J.G."/>
            <person name="Dear P.H."/>
            <person name="Noegel A.A."/>
            <person name="Barrell B.G."/>
            <person name="Kuspa A."/>
        </authorList>
    </citation>
    <scope>NUCLEOTIDE SEQUENCE [LARGE SCALE GENOMIC DNA]</scope>
    <source>
        <strain>AX4</strain>
    </source>
</reference>
<dbReference type="EC" id="2.7.11.22"/>
<dbReference type="EMBL" id="L00652">
    <property type="protein sequence ID" value="AAA16056.1"/>
    <property type="molecule type" value="mRNA"/>
</dbReference>
<dbReference type="EMBL" id="AAFI02000120">
    <property type="protein sequence ID" value="EAL63070.1"/>
    <property type="molecule type" value="Genomic_DNA"/>
</dbReference>
<dbReference type="PIR" id="S40021">
    <property type="entry name" value="S40021"/>
</dbReference>
<dbReference type="RefSeq" id="XP_636601.1">
    <property type="nucleotide sequence ID" value="XM_631509.1"/>
</dbReference>
<dbReference type="SMR" id="P34117"/>
<dbReference type="FunCoup" id="P34117">
    <property type="interactions" value="733"/>
</dbReference>
<dbReference type="STRING" id="44689.P34117"/>
<dbReference type="PaxDb" id="44689-DDB0191155"/>
<dbReference type="EnsemblProtists" id="EAL63070">
    <property type="protein sequence ID" value="EAL63070"/>
    <property type="gene ID" value="DDB_G0288677"/>
</dbReference>
<dbReference type="GeneID" id="8626776"/>
<dbReference type="KEGG" id="ddi:DDB_G0288677"/>
<dbReference type="dictyBase" id="DDB_G0288677">
    <property type="gene designation" value="cdk5"/>
</dbReference>
<dbReference type="VEuPathDB" id="AmoebaDB:DDB_G0288677"/>
<dbReference type="eggNOG" id="KOG0594">
    <property type="taxonomic scope" value="Eukaryota"/>
</dbReference>
<dbReference type="HOGENOM" id="CLU_000288_181_1_1"/>
<dbReference type="InParanoid" id="P34117"/>
<dbReference type="OMA" id="YLYQITR"/>
<dbReference type="PhylomeDB" id="P34117"/>
<dbReference type="BRENDA" id="2.7.11.22">
    <property type="organism ID" value="1939"/>
</dbReference>
<dbReference type="PRO" id="PR:P34117"/>
<dbReference type="Proteomes" id="UP000002195">
    <property type="component" value="Chromosome 5"/>
</dbReference>
<dbReference type="GO" id="GO:0005737">
    <property type="term" value="C:cytoplasm"/>
    <property type="evidence" value="ECO:0000314"/>
    <property type="project" value="dictyBase"/>
</dbReference>
<dbReference type="GO" id="GO:0072686">
    <property type="term" value="C:mitotic spindle"/>
    <property type="evidence" value="ECO:0000314"/>
    <property type="project" value="dictyBase"/>
</dbReference>
<dbReference type="GO" id="GO:0005654">
    <property type="term" value="C:nucleoplasm"/>
    <property type="evidence" value="ECO:0000314"/>
    <property type="project" value="dictyBase"/>
</dbReference>
<dbReference type="GO" id="GO:0005634">
    <property type="term" value="C:nucleus"/>
    <property type="evidence" value="ECO:0000314"/>
    <property type="project" value="dictyBase"/>
</dbReference>
<dbReference type="GO" id="GO:0005524">
    <property type="term" value="F:ATP binding"/>
    <property type="evidence" value="ECO:0007669"/>
    <property type="project" value="UniProtKB-KW"/>
</dbReference>
<dbReference type="GO" id="GO:0005516">
    <property type="term" value="F:calmodulin binding"/>
    <property type="evidence" value="ECO:0000353"/>
    <property type="project" value="dictyBase"/>
</dbReference>
<dbReference type="GO" id="GO:0004693">
    <property type="term" value="F:cyclin-dependent protein serine/threonine kinase activity"/>
    <property type="evidence" value="ECO:0000314"/>
    <property type="project" value="dictyBase"/>
</dbReference>
<dbReference type="GO" id="GO:0106310">
    <property type="term" value="F:protein serine kinase activity"/>
    <property type="evidence" value="ECO:0007669"/>
    <property type="project" value="RHEA"/>
</dbReference>
<dbReference type="GO" id="GO:0031152">
    <property type="term" value="P:aggregation involved in sorocarp development"/>
    <property type="evidence" value="ECO:0000315"/>
    <property type="project" value="dictyBase"/>
</dbReference>
<dbReference type="GO" id="GO:0019954">
    <property type="term" value="P:asexual reproduction"/>
    <property type="evidence" value="ECO:0000315"/>
    <property type="project" value="dictyBase"/>
</dbReference>
<dbReference type="GO" id="GO:0006909">
    <property type="term" value="P:phagocytosis"/>
    <property type="evidence" value="ECO:0000315"/>
    <property type="project" value="dictyBase"/>
</dbReference>
<dbReference type="GO" id="GO:0006907">
    <property type="term" value="P:pinocytosis"/>
    <property type="evidence" value="ECO:0000315"/>
    <property type="project" value="dictyBase"/>
</dbReference>
<dbReference type="GO" id="GO:0031157">
    <property type="term" value="P:regulation of aggregate size involved in sorocarp development"/>
    <property type="evidence" value="ECO:0000315"/>
    <property type="project" value="dictyBase"/>
</dbReference>
<dbReference type="GO" id="GO:1901987">
    <property type="term" value="P:regulation of cell cycle phase transition"/>
    <property type="evidence" value="ECO:0000318"/>
    <property type="project" value="GO_Central"/>
</dbReference>
<dbReference type="GO" id="GO:0030435">
    <property type="term" value="P:sporulation resulting in formation of a cellular spore"/>
    <property type="evidence" value="ECO:0000315"/>
    <property type="project" value="dictyBase"/>
</dbReference>
<dbReference type="GO" id="GO:0016192">
    <property type="term" value="P:vesicle-mediated transport"/>
    <property type="evidence" value="ECO:0000318"/>
    <property type="project" value="GO_Central"/>
</dbReference>
<dbReference type="CDD" id="cd07829">
    <property type="entry name" value="STKc_CDK_like"/>
    <property type="match status" value="1"/>
</dbReference>
<dbReference type="FunFam" id="1.10.510.10:FF:000184">
    <property type="entry name" value="cyclin-dependent kinase 5 homolog"/>
    <property type="match status" value="1"/>
</dbReference>
<dbReference type="FunFam" id="3.30.200.20:FF:000027">
    <property type="entry name" value="Putative Cyclin-dependent kinase 1"/>
    <property type="match status" value="1"/>
</dbReference>
<dbReference type="Gene3D" id="3.30.200.20">
    <property type="entry name" value="Phosphorylase Kinase, domain 1"/>
    <property type="match status" value="1"/>
</dbReference>
<dbReference type="Gene3D" id="1.10.510.10">
    <property type="entry name" value="Transferase(Phosphotransferase) domain 1"/>
    <property type="match status" value="1"/>
</dbReference>
<dbReference type="InterPro" id="IPR050108">
    <property type="entry name" value="CDK"/>
</dbReference>
<dbReference type="InterPro" id="IPR011009">
    <property type="entry name" value="Kinase-like_dom_sf"/>
</dbReference>
<dbReference type="InterPro" id="IPR000719">
    <property type="entry name" value="Prot_kinase_dom"/>
</dbReference>
<dbReference type="InterPro" id="IPR017441">
    <property type="entry name" value="Protein_kinase_ATP_BS"/>
</dbReference>
<dbReference type="InterPro" id="IPR008271">
    <property type="entry name" value="Ser/Thr_kinase_AS"/>
</dbReference>
<dbReference type="PANTHER" id="PTHR24056">
    <property type="entry name" value="CELL DIVISION PROTEIN KINASE"/>
    <property type="match status" value="1"/>
</dbReference>
<dbReference type="PANTHER" id="PTHR24056:SF46">
    <property type="entry name" value="CYCLIN-DEPENDENT KINASE 5"/>
    <property type="match status" value="1"/>
</dbReference>
<dbReference type="Pfam" id="PF00069">
    <property type="entry name" value="Pkinase"/>
    <property type="match status" value="1"/>
</dbReference>
<dbReference type="SMART" id="SM00220">
    <property type="entry name" value="S_TKc"/>
    <property type="match status" value="1"/>
</dbReference>
<dbReference type="SUPFAM" id="SSF56112">
    <property type="entry name" value="Protein kinase-like (PK-like)"/>
    <property type="match status" value="1"/>
</dbReference>
<dbReference type="PROSITE" id="PS00107">
    <property type="entry name" value="PROTEIN_KINASE_ATP"/>
    <property type="match status" value="1"/>
</dbReference>
<dbReference type="PROSITE" id="PS50011">
    <property type="entry name" value="PROTEIN_KINASE_DOM"/>
    <property type="match status" value="1"/>
</dbReference>
<dbReference type="PROSITE" id="PS00108">
    <property type="entry name" value="PROTEIN_KINASE_ST"/>
    <property type="match status" value="1"/>
</dbReference>
<organism>
    <name type="scientific">Dictyostelium discoideum</name>
    <name type="common">Social amoeba</name>
    <dbReference type="NCBI Taxonomy" id="44689"/>
    <lineage>
        <taxon>Eukaryota</taxon>
        <taxon>Amoebozoa</taxon>
        <taxon>Evosea</taxon>
        <taxon>Eumycetozoa</taxon>
        <taxon>Dictyostelia</taxon>
        <taxon>Dictyosteliales</taxon>
        <taxon>Dictyosteliaceae</taxon>
        <taxon>Dictyostelium</taxon>
    </lineage>
</organism>
<gene>
    <name type="primary">cdk5</name>
    <name type="synonym">crp</name>
    <name type="synonym">crpA</name>
    <name type="ORF">DDB_G0288677</name>
</gene>
<comment type="catalytic activity">
    <reaction>
        <text>L-seryl-[protein] + ATP = O-phospho-L-seryl-[protein] + ADP + H(+)</text>
        <dbReference type="Rhea" id="RHEA:17989"/>
        <dbReference type="Rhea" id="RHEA-COMP:9863"/>
        <dbReference type="Rhea" id="RHEA-COMP:11604"/>
        <dbReference type="ChEBI" id="CHEBI:15378"/>
        <dbReference type="ChEBI" id="CHEBI:29999"/>
        <dbReference type="ChEBI" id="CHEBI:30616"/>
        <dbReference type="ChEBI" id="CHEBI:83421"/>
        <dbReference type="ChEBI" id="CHEBI:456216"/>
        <dbReference type="EC" id="2.7.11.22"/>
    </reaction>
</comment>
<comment type="catalytic activity">
    <reaction>
        <text>L-threonyl-[protein] + ATP = O-phospho-L-threonyl-[protein] + ADP + H(+)</text>
        <dbReference type="Rhea" id="RHEA:46608"/>
        <dbReference type="Rhea" id="RHEA-COMP:11060"/>
        <dbReference type="Rhea" id="RHEA-COMP:11605"/>
        <dbReference type="ChEBI" id="CHEBI:15378"/>
        <dbReference type="ChEBI" id="CHEBI:30013"/>
        <dbReference type="ChEBI" id="CHEBI:30616"/>
        <dbReference type="ChEBI" id="CHEBI:61977"/>
        <dbReference type="ChEBI" id="CHEBI:456216"/>
        <dbReference type="EC" id="2.7.11.22"/>
    </reaction>
</comment>
<comment type="activity regulation">
    <text evidence="1">Phosphorylation at Thr-14 or Tyr-15 inactivates the enzyme.</text>
</comment>
<comment type="similarity">
    <text evidence="4">Belongs to the protein kinase superfamily. CMGC Ser/Thr protein kinase family. CDC2/CDKX subfamily.</text>
</comment>
<proteinExistence type="evidence at transcript level"/>
<name>CDK5_DICDI</name>
<accession>P34117</accession>
<accession>Q54II5</accession>
<keyword id="KW-0067">ATP-binding</keyword>
<keyword id="KW-0418">Kinase</keyword>
<keyword id="KW-0547">Nucleotide-binding</keyword>
<keyword id="KW-0597">Phosphoprotein</keyword>
<keyword id="KW-1185">Reference proteome</keyword>
<keyword id="KW-0723">Serine/threonine-protein kinase</keyword>
<keyword id="KW-0808">Transferase</keyword>
<evidence type="ECO:0000250" key="1"/>
<evidence type="ECO:0000255" key="2">
    <source>
        <dbReference type="PROSITE-ProRule" id="PRU00159"/>
    </source>
</evidence>
<evidence type="ECO:0000255" key="3">
    <source>
        <dbReference type="PROSITE-ProRule" id="PRU10027"/>
    </source>
</evidence>
<evidence type="ECO:0000305" key="4"/>
<sequence length="292" mass="33219">MEKYSKIEKLGEGTYGIVYKAKNRETGEIVALKRIRLDSEDEGVPCTAIREISLLKELKHPNIVRLHDVIHTERKLTLVFEYLDQDLKKYLDECGGEISKPTIKSFMYQLLKGVAFCHDHRVLHRDLKPQNLLINRKGELKLADFGLARAFGIPVRTYSHEVVTLWYRAPDVLMGSRKYSTPIDIWSAGCIFAEMASGRPLFPGSGTSDQLFRIFKILGTPNEESWPSITELPEYKTDFPVHPAHQLSSIVHGLDEKGLNLLSKMLQYDPNQRITAAAALKHPYFDGLEPIN</sequence>
<protein>
    <recommendedName>
        <fullName>Cyclin-dependent kinase 5 homolog</fullName>
        <ecNumber>2.7.11.22</ecNumber>
    </recommendedName>
    <alternativeName>
        <fullName>CDC2-like serine/threonine-protein kinase CRP</fullName>
    </alternativeName>
    <alternativeName>
        <fullName>Cell division protein kinase 5</fullName>
    </alternativeName>
</protein>
<feature type="chain" id="PRO_0000085740" description="Cyclin-dependent kinase 5 homolog">
    <location>
        <begin position="1"/>
        <end position="292"/>
    </location>
</feature>
<feature type="domain" description="Protein kinase" evidence="2">
    <location>
        <begin position="4"/>
        <end position="285"/>
    </location>
</feature>
<feature type="active site" description="Proton acceptor" evidence="2 3">
    <location>
        <position position="126"/>
    </location>
</feature>
<feature type="binding site" evidence="2">
    <location>
        <begin position="10"/>
        <end position="18"/>
    </location>
    <ligand>
        <name>ATP</name>
        <dbReference type="ChEBI" id="CHEBI:30616"/>
    </ligand>
</feature>
<feature type="binding site" evidence="2">
    <location>
        <position position="33"/>
    </location>
    <ligand>
        <name>ATP</name>
        <dbReference type="ChEBI" id="CHEBI:30616"/>
    </ligand>
</feature>
<feature type="modified residue" description="Phosphothreonine" evidence="1">
    <location>
        <position position="14"/>
    </location>
</feature>
<feature type="modified residue" description="Phosphotyrosine" evidence="1">
    <location>
        <position position="15"/>
    </location>
</feature>
<feature type="sequence conflict" description="In Ref. 1; AAA16056." evidence="4" ref="1">
    <original>Y</original>
    <variation>N</variation>
    <location>
        <position position="19"/>
    </location>
</feature>
<feature type="sequence conflict" description="In Ref. 1; AAA16056." evidence="4" ref="1">
    <original>G</original>
    <variation>L</variation>
    <location>
        <position position="189"/>
    </location>
</feature>